<protein>
    <recommendedName>
        <fullName evidence="1">NAD(P)H-quinone oxidoreductase subunit I, chloroplastic</fullName>
        <ecNumber evidence="1">7.1.1.-</ecNumber>
    </recommendedName>
    <alternativeName>
        <fullName evidence="1">NAD(P)H dehydrogenase subunit I</fullName>
        <shortName evidence="1">NDH subunit I</shortName>
    </alternativeName>
    <alternativeName>
        <fullName evidence="1">NADH-plastoquinone oxidoreductase subunit I</fullName>
    </alternativeName>
</protein>
<sequence>MFTMVNGFRNYSEQAIQAARYIGQGFMVTLDHMNRLPMTIQYPYEKLIPSERFRGRIHFEFDKCIACEVCVRVCPINLPVVDWELKKDVKKKQLKSYSIDFGVCIFCGNCVEYCPTNCLSMTEEYELSIYDRHDLNYDQIALGRLPISVIEDSTIKTISNLSYLSKGSIEGHSNSRNVTNF</sequence>
<evidence type="ECO:0000255" key="1">
    <source>
        <dbReference type="HAMAP-Rule" id="MF_01351"/>
    </source>
</evidence>
<feature type="chain" id="PRO_0000245671" description="NAD(P)H-quinone oxidoreductase subunit I, chloroplastic">
    <location>
        <begin position="1"/>
        <end position="181"/>
    </location>
</feature>
<feature type="domain" description="4Fe-4S ferredoxin-type 1" evidence="1">
    <location>
        <begin position="55"/>
        <end position="84"/>
    </location>
</feature>
<feature type="domain" description="4Fe-4S ferredoxin-type 2" evidence="1">
    <location>
        <begin position="95"/>
        <end position="124"/>
    </location>
</feature>
<feature type="binding site" evidence="1">
    <location>
        <position position="64"/>
    </location>
    <ligand>
        <name>[4Fe-4S] cluster</name>
        <dbReference type="ChEBI" id="CHEBI:49883"/>
        <label>1</label>
    </ligand>
</feature>
<feature type="binding site" evidence="1">
    <location>
        <position position="67"/>
    </location>
    <ligand>
        <name>[4Fe-4S] cluster</name>
        <dbReference type="ChEBI" id="CHEBI:49883"/>
        <label>1</label>
    </ligand>
</feature>
<feature type="binding site" evidence="1">
    <location>
        <position position="70"/>
    </location>
    <ligand>
        <name>[4Fe-4S] cluster</name>
        <dbReference type="ChEBI" id="CHEBI:49883"/>
        <label>1</label>
    </ligand>
</feature>
<feature type="binding site" evidence="1">
    <location>
        <position position="74"/>
    </location>
    <ligand>
        <name>[4Fe-4S] cluster</name>
        <dbReference type="ChEBI" id="CHEBI:49883"/>
        <label>2</label>
    </ligand>
</feature>
<feature type="binding site" evidence="1">
    <location>
        <position position="104"/>
    </location>
    <ligand>
        <name>[4Fe-4S] cluster</name>
        <dbReference type="ChEBI" id="CHEBI:49883"/>
        <label>2</label>
    </ligand>
</feature>
<feature type="binding site" evidence="1">
    <location>
        <position position="107"/>
    </location>
    <ligand>
        <name>[4Fe-4S] cluster</name>
        <dbReference type="ChEBI" id="CHEBI:49883"/>
        <label>2</label>
    </ligand>
</feature>
<feature type="binding site" evidence="1">
    <location>
        <position position="110"/>
    </location>
    <ligand>
        <name>[4Fe-4S] cluster</name>
        <dbReference type="ChEBI" id="CHEBI:49883"/>
        <label>2</label>
    </ligand>
</feature>
<feature type="binding site" evidence="1">
    <location>
        <position position="114"/>
    </location>
    <ligand>
        <name>[4Fe-4S] cluster</name>
        <dbReference type="ChEBI" id="CHEBI:49883"/>
        <label>1</label>
    </ligand>
</feature>
<reference key="1">
    <citation type="journal article" date="2003" name="Nucleic Acids Res.">
        <title>Complete chloroplast DNA sequence of the moss Physcomitrella patens: evidence for the loss and relocation of rpoA from the chloroplast to the nucleus.</title>
        <authorList>
            <person name="Sugiura C."/>
            <person name="Kobayashi Y."/>
            <person name="Setsuyuki A."/>
            <person name="Sugita C."/>
            <person name="Sugita M."/>
        </authorList>
    </citation>
    <scope>NUCLEOTIDE SEQUENCE [LARGE SCALE GENOMIC DNA]</scope>
    <source>
        <strain>cv. Gransden 2004</strain>
    </source>
</reference>
<gene>
    <name evidence="1" type="primary">ndhI</name>
</gene>
<organism>
    <name type="scientific">Physcomitrium patens</name>
    <name type="common">Spreading-leaved earth moss</name>
    <name type="synonym">Physcomitrella patens</name>
    <dbReference type="NCBI Taxonomy" id="3218"/>
    <lineage>
        <taxon>Eukaryota</taxon>
        <taxon>Viridiplantae</taxon>
        <taxon>Streptophyta</taxon>
        <taxon>Embryophyta</taxon>
        <taxon>Bryophyta</taxon>
        <taxon>Bryophytina</taxon>
        <taxon>Bryopsida</taxon>
        <taxon>Funariidae</taxon>
        <taxon>Funariales</taxon>
        <taxon>Funariaceae</taxon>
        <taxon>Physcomitrium</taxon>
    </lineage>
</organism>
<comment type="function">
    <text evidence="1">NDH shuttles electrons from NAD(P)H:plastoquinone, via FMN and iron-sulfur (Fe-S) centers, to quinones in the photosynthetic chain and possibly in a chloroplast respiratory chain. The immediate electron acceptor for the enzyme in this species is believed to be plastoquinone. Couples the redox reaction to proton translocation, and thus conserves the redox energy in a proton gradient.</text>
</comment>
<comment type="catalytic activity">
    <reaction evidence="1">
        <text>a plastoquinone + NADH + (n+1) H(+)(in) = a plastoquinol + NAD(+) + n H(+)(out)</text>
        <dbReference type="Rhea" id="RHEA:42608"/>
        <dbReference type="Rhea" id="RHEA-COMP:9561"/>
        <dbReference type="Rhea" id="RHEA-COMP:9562"/>
        <dbReference type="ChEBI" id="CHEBI:15378"/>
        <dbReference type="ChEBI" id="CHEBI:17757"/>
        <dbReference type="ChEBI" id="CHEBI:57540"/>
        <dbReference type="ChEBI" id="CHEBI:57945"/>
        <dbReference type="ChEBI" id="CHEBI:62192"/>
    </reaction>
</comment>
<comment type="catalytic activity">
    <reaction evidence="1">
        <text>a plastoquinone + NADPH + (n+1) H(+)(in) = a plastoquinol + NADP(+) + n H(+)(out)</text>
        <dbReference type="Rhea" id="RHEA:42612"/>
        <dbReference type="Rhea" id="RHEA-COMP:9561"/>
        <dbReference type="Rhea" id="RHEA-COMP:9562"/>
        <dbReference type="ChEBI" id="CHEBI:15378"/>
        <dbReference type="ChEBI" id="CHEBI:17757"/>
        <dbReference type="ChEBI" id="CHEBI:57783"/>
        <dbReference type="ChEBI" id="CHEBI:58349"/>
        <dbReference type="ChEBI" id="CHEBI:62192"/>
    </reaction>
</comment>
<comment type="cofactor">
    <cofactor evidence="1">
        <name>[4Fe-4S] cluster</name>
        <dbReference type="ChEBI" id="CHEBI:49883"/>
    </cofactor>
    <text evidence="1">Binds 2 [4Fe-4S] clusters per subunit.</text>
</comment>
<comment type="subunit">
    <text evidence="1">NDH is composed of at least 16 different subunits, 5 of which are encoded in the nucleus.</text>
</comment>
<comment type="subcellular location">
    <subcellularLocation>
        <location evidence="1">Plastid</location>
        <location evidence="1">Chloroplast thylakoid membrane</location>
        <topology evidence="1">Peripheral membrane protein</topology>
    </subcellularLocation>
</comment>
<comment type="similarity">
    <text evidence="1">Belongs to the complex I 23 kDa subunit family.</text>
</comment>
<name>NDHI_PHYPA</name>
<dbReference type="EC" id="7.1.1.-" evidence="1"/>
<dbReference type="EMBL" id="AP005672">
    <property type="protein sequence ID" value="BAC85092.1"/>
    <property type="molecule type" value="Genomic_DNA"/>
</dbReference>
<dbReference type="RefSeq" id="NP_904242.1">
    <property type="nucleotide sequence ID" value="NC_005087.2"/>
</dbReference>
<dbReference type="RefSeq" id="YP_009477572.1">
    <property type="nucleotide sequence ID" value="NC_037465.1"/>
</dbReference>
<dbReference type="SMR" id="Q6YXP9"/>
<dbReference type="FunCoup" id="Q6YXP9">
    <property type="interactions" value="73"/>
</dbReference>
<dbReference type="STRING" id="3218.Q6YXP9"/>
<dbReference type="GeneID" id="2546735"/>
<dbReference type="GeneID" id="36487217"/>
<dbReference type="KEGG" id="ppp:2546735"/>
<dbReference type="InParanoid" id="Q6YXP9"/>
<dbReference type="OrthoDB" id="24758at2759"/>
<dbReference type="Proteomes" id="UP000006727">
    <property type="component" value="Chloroplast"/>
</dbReference>
<dbReference type="GO" id="GO:0009535">
    <property type="term" value="C:chloroplast thylakoid membrane"/>
    <property type="evidence" value="ECO:0007669"/>
    <property type="project" value="UniProtKB-SubCell"/>
</dbReference>
<dbReference type="GO" id="GO:0051539">
    <property type="term" value="F:4 iron, 4 sulfur cluster binding"/>
    <property type="evidence" value="ECO:0007669"/>
    <property type="project" value="UniProtKB-KW"/>
</dbReference>
<dbReference type="GO" id="GO:0005506">
    <property type="term" value="F:iron ion binding"/>
    <property type="evidence" value="ECO:0007669"/>
    <property type="project" value="UniProtKB-UniRule"/>
</dbReference>
<dbReference type="GO" id="GO:0008137">
    <property type="term" value="F:NADH dehydrogenase (ubiquinone) activity"/>
    <property type="evidence" value="ECO:0007669"/>
    <property type="project" value="InterPro"/>
</dbReference>
<dbReference type="GO" id="GO:0048038">
    <property type="term" value="F:quinone binding"/>
    <property type="evidence" value="ECO:0007669"/>
    <property type="project" value="UniProtKB-KW"/>
</dbReference>
<dbReference type="GO" id="GO:0019684">
    <property type="term" value="P:photosynthesis, light reaction"/>
    <property type="evidence" value="ECO:0007669"/>
    <property type="project" value="UniProtKB-UniRule"/>
</dbReference>
<dbReference type="Gene3D" id="3.30.70.3270">
    <property type="match status" value="1"/>
</dbReference>
<dbReference type="HAMAP" id="MF_01351">
    <property type="entry name" value="NDH1_NuoI"/>
    <property type="match status" value="1"/>
</dbReference>
<dbReference type="InterPro" id="IPR017896">
    <property type="entry name" value="4Fe4S_Fe-S-bd"/>
</dbReference>
<dbReference type="InterPro" id="IPR017900">
    <property type="entry name" value="4Fe4S_Fe_S_CS"/>
</dbReference>
<dbReference type="InterPro" id="IPR010226">
    <property type="entry name" value="NADH_quinone_OxRdtase_chainI"/>
</dbReference>
<dbReference type="InterPro" id="IPR004497">
    <property type="entry name" value="NDHI"/>
</dbReference>
<dbReference type="NCBIfam" id="TIGR00403">
    <property type="entry name" value="ndhI"/>
    <property type="match status" value="1"/>
</dbReference>
<dbReference type="NCBIfam" id="TIGR01971">
    <property type="entry name" value="NuoI"/>
    <property type="match status" value="1"/>
</dbReference>
<dbReference type="NCBIfam" id="NF004537">
    <property type="entry name" value="PRK05888.1-3"/>
    <property type="match status" value="1"/>
</dbReference>
<dbReference type="PANTHER" id="PTHR47275">
    <property type="entry name" value="NAD(P)H-QUINONE OXIDOREDUCTASE SUBUNIT I, CHLOROPLASTIC"/>
    <property type="match status" value="1"/>
</dbReference>
<dbReference type="PANTHER" id="PTHR47275:SF1">
    <property type="entry name" value="NAD(P)H-QUINONE OXIDOREDUCTASE SUBUNIT I, CHLOROPLASTIC"/>
    <property type="match status" value="1"/>
</dbReference>
<dbReference type="Pfam" id="PF12838">
    <property type="entry name" value="Fer4_7"/>
    <property type="match status" value="1"/>
</dbReference>
<dbReference type="SUPFAM" id="SSF54862">
    <property type="entry name" value="4Fe-4S ferredoxins"/>
    <property type="match status" value="1"/>
</dbReference>
<dbReference type="PROSITE" id="PS00198">
    <property type="entry name" value="4FE4S_FER_1"/>
    <property type="match status" value="2"/>
</dbReference>
<dbReference type="PROSITE" id="PS51379">
    <property type="entry name" value="4FE4S_FER_2"/>
    <property type="match status" value="2"/>
</dbReference>
<accession>Q6YXP9</accession>
<geneLocation type="chloroplast"/>
<keyword id="KW-0004">4Fe-4S</keyword>
<keyword id="KW-0150">Chloroplast</keyword>
<keyword id="KW-0408">Iron</keyword>
<keyword id="KW-0411">Iron-sulfur</keyword>
<keyword id="KW-0472">Membrane</keyword>
<keyword id="KW-0479">Metal-binding</keyword>
<keyword id="KW-0520">NAD</keyword>
<keyword id="KW-0521">NADP</keyword>
<keyword id="KW-0934">Plastid</keyword>
<keyword id="KW-0618">Plastoquinone</keyword>
<keyword id="KW-0874">Quinone</keyword>
<keyword id="KW-1185">Reference proteome</keyword>
<keyword id="KW-0677">Repeat</keyword>
<keyword id="KW-0793">Thylakoid</keyword>
<keyword id="KW-1278">Translocase</keyword>
<proteinExistence type="inferred from homology"/>